<feature type="chain" id="PRO_0000355415" description="Cytochrome b6-f complex subunit 8">
    <location>
        <begin position="1"/>
        <end position="33"/>
    </location>
</feature>
<feature type="transmembrane region" description="Helical" evidence="1">
    <location>
        <begin position="2"/>
        <end position="22"/>
    </location>
</feature>
<proteinExistence type="inferred from homology"/>
<organism>
    <name type="scientific">Synechococcus sp. (strain RCC307)</name>
    <dbReference type="NCBI Taxonomy" id="316278"/>
    <lineage>
        <taxon>Bacteria</taxon>
        <taxon>Bacillati</taxon>
        <taxon>Cyanobacteriota</taxon>
        <taxon>Cyanophyceae</taxon>
        <taxon>Synechococcales</taxon>
        <taxon>Synechococcaceae</taxon>
        <taxon>Synechococcus</taxon>
    </lineage>
</organism>
<dbReference type="EMBL" id="CT978603">
    <property type="protein sequence ID" value="CAK28310.1"/>
    <property type="molecule type" value="Genomic_DNA"/>
</dbReference>
<dbReference type="SMR" id="A5GTV1"/>
<dbReference type="STRING" id="316278.SynRCC307_1407"/>
<dbReference type="KEGG" id="syr:SynRCC307_1407"/>
<dbReference type="eggNOG" id="ENOG502ZT1J">
    <property type="taxonomic scope" value="Bacteria"/>
</dbReference>
<dbReference type="HOGENOM" id="CLU_215774_0_0_3"/>
<dbReference type="OrthoDB" id="560308at2"/>
<dbReference type="Proteomes" id="UP000001115">
    <property type="component" value="Chromosome"/>
</dbReference>
<dbReference type="GO" id="GO:0009512">
    <property type="term" value="C:cytochrome b6f complex"/>
    <property type="evidence" value="ECO:0007669"/>
    <property type="project" value="InterPro"/>
</dbReference>
<dbReference type="GO" id="GO:0031676">
    <property type="term" value="C:plasma membrane-derived thylakoid membrane"/>
    <property type="evidence" value="ECO:0007669"/>
    <property type="project" value="UniProtKB-SubCell"/>
</dbReference>
<dbReference type="GO" id="GO:0045158">
    <property type="term" value="F:electron transporter, transferring electrons within cytochrome b6/f complex of photosystem II activity"/>
    <property type="evidence" value="ECO:0007669"/>
    <property type="project" value="InterPro"/>
</dbReference>
<dbReference type="GO" id="GO:0017004">
    <property type="term" value="P:cytochrome complex assembly"/>
    <property type="evidence" value="ECO:0007669"/>
    <property type="project" value="UniProtKB-UniRule"/>
</dbReference>
<dbReference type="GO" id="GO:0015979">
    <property type="term" value="P:photosynthesis"/>
    <property type="evidence" value="ECO:0007669"/>
    <property type="project" value="UniProtKB-KW"/>
</dbReference>
<dbReference type="HAMAP" id="MF_00395">
    <property type="entry name" value="Cytb6_f_PetN"/>
    <property type="match status" value="1"/>
</dbReference>
<dbReference type="InterPro" id="IPR036143">
    <property type="entry name" value="Cytochr_b6-f_cplx_su8_sf"/>
</dbReference>
<dbReference type="InterPro" id="IPR005497">
    <property type="entry name" value="Cytochrome_b6-f_cplx_su8"/>
</dbReference>
<dbReference type="NCBIfam" id="NF002709">
    <property type="entry name" value="PRK02529.1"/>
    <property type="match status" value="1"/>
</dbReference>
<dbReference type="Pfam" id="PF03742">
    <property type="entry name" value="PetN"/>
    <property type="match status" value="1"/>
</dbReference>
<dbReference type="SUPFAM" id="SSF103451">
    <property type="entry name" value="PetN subunit of the cytochrome b6f complex"/>
    <property type="match status" value="1"/>
</dbReference>
<comment type="function">
    <text evidence="1">Component of the cytochrome b6-f complex, which mediates electron transfer between photosystem II (PSII) and photosystem I (PSI), cyclic electron flow around PSI, and state transitions.</text>
</comment>
<comment type="subunit">
    <text evidence="1">The 4 large subunits of the cytochrome b6-f complex are cytochrome b6, subunit IV (17 kDa polypeptide, PetD), cytochrome f and the Rieske protein, while the 4 small subunits are PetG, PetL, PetM and PetN. The complex functions as a dimer.</text>
</comment>
<comment type="subcellular location">
    <subcellularLocation>
        <location evidence="1">Cellular thylakoid membrane</location>
        <topology evidence="1">Single-pass membrane protein</topology>
    </subcellularLocation>
</comment>
<comment type="similarity">
    <text evidence="1">Belongs to the PetN family.</text>
</comment>
<gene>
    <name evidence="1" type="primary">petN</name>
    <name type="ordered locus">SynRCC307_1407</name>
</gene>
<accession>A5GTV1</accession>
<keyword id="KW-0249">Electron transport</keyword>
<keyword id="KW-0472">Membrane</keyword>
<keyword id="KW-0602">Photosynthesis</keyword>
<keyword id="KW-1185">Reference proteome</keyword>
<keyword id="KW-0793">Thylakoid</keyword>
<keyword id="KW-0812">Transmembrane</keyword>
<keyword id="KW-1133">Transmembrane helix</keyword>
<keyword id="KW-0813">Transport</keyword>
<sequence>MLISLGWAALAATFTFSIAMVVWGRNGDGSINF</sequence>
<reference key="1">
    <citation type="submission" date="2006-05" db="EMBL/GenBank/DDBJ databases">
        <authorList>
            <consortium name="Genoscope"/>
        </authorList>
    </citation>
    <scope>NUCLEOTIDE SEQUENCE [LARGE SCALE GENOMIC DNA]</scope>
    <source>
        <strain>RCC307</strain>
    </source>
</reference>
<protein>
    <recommendedName>
        <fullName evidence="1">Cytochrome b6-f complex subunit 8</fullName>
    </recommendedName>
    <alternativeName>
        <fullName evidence="1">Cytochrome b6-f complex subunit PetN</fullName>
    </alternativeName>
    <alternativeName>
        <fullName evidence="1">Cytochrome b6-f complex subunit VIII</fullName>
    </alternativeName>
</protein>
<evidence type="ECO:0000255" key="1">
    <source>
        <dbReference type="HAMAP-Rule" id="MF_00395"/>
    </source>
</evidence>
<name>PETN_SYNR3</name>